<dbReference type="EC" id="6.1.1.3" evidence="1"/>
<dbReference type="EMBL" id="CP000419">
    <property type="protein sequence ID" value="ABJ65881.1"/>
    <property type="molecule type" value="Genomic_DNA"/>
</dbReference>
<dbReference type="RefSeq" id="WP_002950123.1">
    <property type="nucleotide sequence ID" value="NZ_CP086001.1"/>
</dbReference>
<dbReference type="SMR" id="Q03LP1"/>
<dbReference type="GeneID" id="66898473"/>
<dbReference type="KEGG" id="ste:STER_0613"/>
<dbReference type="HOGENOM" id="CLU_008554_0_1_9"/>
<dbReference type="GO" id="GO:0005737">
    <property type="term" value="C:cytoplasm"/>
    <property type="evidence" value="ECO:0007669"/>
    <property type="project" value="UniProtKB-SubCell"/>
</dbReference>
<dbReference type="GO" id="GO:0005524">
    <property type="term" value="F:ATP binding"/>
    <property type="evidence" value="ECO:0007669"/>
    <property type="project" value="UniProtKB-UniRule"/>
</dbReference>
<dbReference type="GO" id="GO:0140096">
    <property type="term" value="F:catalytic activity, acting on a protein"/>
    <property type="evidence" value="ECO:0007669"/>
    <property type="project" value="UniProtKB-ARBA"/>
</dbReference>
<dbReference type="GO" id="GO:0046872">
    <property type="term" value="F:metal ion binding"/>
    <property type="evidence" value="ECO:0007669"/>
    <property type="project" value="UniProtKB-KW"/>
</dbReference>
<dbReference type="GO" id="GO:0004829">
    <property type="term" value="F:threonine-tRNA ligase activity"/>
    <property type="evidence" value="ECO:0007669"/>
    <property type="project" value="UniProtKB-UniRule"/>
</dbReference>
<dbReference type="GO" id="GO:0016740">
    <property type="term" value="F:transferase activity"/>
    <property type="evidence" value="ECO:0007669"/>
    <property type="project" value="UniProtKB-ARBA"/>
</dbReference>
<dbReference type="GO" id="GO:0000049">
    <property type="term" value="F:tRNA binding"/>
    <property type="evidence" value="ECO:0007669"/>
    <property type="project" value="UniProtKB-KW"/>
</dbReference>
<dbReference type="GO" id="GO:0006435">
    <property type="term" value="P:threonyl-tRNA aminoacylation"/>
    <property type="evidence" value="ECO:0007669"/>
    <property type="project" value="UniProtKB-UniRule"/>
</dbReference>
<dbReference type="CDD" id="cd01667">
    <property type="entry name" value="TGS_ThrRS"/>
    <property type="match status" value="1"/>
</dbReference>
<dbReference type="CDD" id="cd00860">
    <property type="entry name" value="ThrRS_anticodon"/>
    <property type="match status" value="1"/>
</dbReference>
<dbReference type="CDD" id="cd00771">
    <property type="entry name" value="ThrRS_core"/>
    <property type="match status" value="1"/>
</dbReference>
<dbReference type="FunFam" id="3.10.20.30:FF:000005">
    <property type="entry name" value="Threonine--tRNA ligase"/>
    <property type="match status" value="1"/>
</dbReference>
<dbReference type="FunFam" id="3.30.54.20:FF:000002">
    <property type="entry name" value="Threonine--tRNA ligase"/>
    <property type="match status" value="1"/>
</dbReference>
<dbReference type="FunFam" id="3.30.930.10:FF:000002">
    <property type="entry name" value="Threonine--tRNA ligase"/>
    <property type="match status" value="1"/>
</dbReference>
<dbReference type="FunFam" id="3.40.50.800:FF:000001">
    <property type="entry name" value="Threonine--tRNA ligase"/>
    <property type="match status" value="1"/>
</dbReference>
<dbReference type="FunFam" id="3.30.980.10:FF:000005">
    <property type="entry name" value="Threonyl-tRNA synthetase, mitochondrial"/>
    <property type="match status" value="1"/>
</dbReference>
<dbReference type="Gene3D" id="3.10.20.30">
    <property type="match status" value="1"/>
</dbReference>
<dbReference type="Gene3D" id="3.30.54.20">
    <property type="match status" value="1"/>
</dbReference>
<dbReference type="Gene3D" id="3.40.50.800">
    <property type="entry name" value="Anticodon-binding domain"/>
    <property type="match status" value="1"/>
</dbReference>
<dbReference type="Gene3D" id="3.30.930.10">
    <property type="entry name" value="Bira Bifunctional Protein, Domain 2"/>
    <property type="match status" value="1"/>
</dbReference>
<dbReference type="Gene3D" id="3.30.980.10">
    <property type="entry name" value="Threonyl-trna Synthetase, Chain A, domain 2"/>
    <property type="match status" value="1"/>
</dbReference>
<dbReference type="HAMAP" id="MF_00184">
    <property type="entry name" value="Thr_tRNA_synth"/>
    <property type="match status" value="1"/>
</dbReference>
<dbReference type="InterPro" id="IPR002314">
    <property type="entry name" value="aa-tRNA-synt_IIb"/>
</dbReference>
<dbReference type="InterPro" id="IPR006195">
    <property type="entry name" value="aa-tRNA-synth_II"/>
</dbReference>
<dbReference type="InterPro" id="IPR045864">
    <property type="entry name" value="aa-tRNA-synth_II/BPL/LPL"/>
</dbReference>
<dbReference type="InterPro" id="IPR004154">
    <property type="entry name" value="Anticodon-bd"/>
</dbReference>
<dbReference type="InterPro" id="IPR036621">
    <property type="entry name" value="Anticodon-bd_dom_sf"/>
</dbReference>
<dbReference type="InterPro" id="IPR012675">
    <property type="entry name" value="Beta-grasp_dom_sf"/>
</dbReference>
<dbReference type="InterPro" id="IPR004095">
    <property type="entry name" value="TGS"/>
</dbReference>
<dbReference type="InterPro" id="IPR012676">
    <property type="entry name" value="TGS-like"/>
</dbReference>
<dbReference type="InterPro" id="IPR002320">
    <property type="entry name" value="Thr-tRNA-ligase_IIa"/>
</dbReference>
<dbReference type="InterPro" id="IPR018163">
    <property type="entry name" value="Thr/Ala-tRNA-synth_IIc_edit"/>
</dbReference>
<dbReference type="InterPro" id="IPR047246">
    <property type="entry name" value="ThrRS_anticodon"/>
</dbReference>
<dbReference type="InterPro" id="IPR033728">
    <property type="entry name" value="ThrRS_core"/>
</dbReference>
<dbReference type="InterPro" id="IPR012947">
    <property type="entry name" value="tRNA_SAD"/>
</dbReference>
<dbReference type="NCBIfam" id="TIGR00418">
    <property type="entry name" value="thrS"/>
    <property type="match status" value="1"/>
</dbReference>
<dbReference type="PANTHER" id="PTHR11451:SF56">
    <property type="entry name" value="THREONINE--TRNA LIGASE 1"/>
    <property type="match status" value="1"/>
</dbReference>
<dbReference type="PANTHER" id="PTHR11451">
    <property type="entry name" value="THREONINE-TRNA LIGASE"/>
    <property type="match status" value="1"/>
</dbReference>
<dbReference type="Pfam" id="PF03129">
    <property type="entry name" value="HGTP_anticodon"/>
    <property type="match status" value="1"/>
</dbReference>
<dbReference type="Pfam" id="PF02824">
    <property type="entry name" value="TGS"/>
    <property type="match status" value="1"/>
</dbReference>
<dbReference type="Pfam" id="PF00587">
    <property type="entry name" value="tRNA-synt_2b"/>
    <property type="match status" value="1"/>
</dbReference>
<dbReference type="Pfam" id="PF07973">
    <property type="entry name" value="tRNA_SAD"/>
    <property type="match status" value="1"/>
</dbReference>
<dbReference type="PRINTS" id="PR01047">
    <property type="entry name" value="TRNASYNTHTHR"/>
</dbReference>
<dbReference type="SMART" id="SM00863">
    <property type="entry name" value="tRNA_SAD"/>
    <property type="match status" value="1"/>
</dbReference>
<dbReference type="SUPFAM" id="SSF52954">
    <property type="entry name" value="Class II aaRS ABD-related"/>
    <property type="match status" value="1"/>
</dbReference>
<dbReference type="SUPFAM" id="SSF55681">
    <property type="entry name" value="Class II aaRS and biotin synthetases"/>
    <property type="match status" value="1"/>
</dbReference>
<dbReference type="SUPFAM" id="SSF81271">
    <property type="entry name" value="TGS-like"/>
    <property type="match status" value="1"/>
</dbReference>
<dbReference type="SUPFAM" id="SSF55186">
    <property type="entry name" value="ThrRS/AlaRS common domain"/>
    <property type="match status" value="1"/>
</dbReference>
<dbReference type="PROSITE" id="PS50862">
    <property type="entry name" value="AA_TRNA_LIGASE_II"/>
    <property type="match status" value="1"/>
</dbReference>
<dbReference type="PROSITE" id="PS51880">
    <property type="entry name" value="TGS"/>
    <property type="match status" value="1"/>
</dbReference>
<evidence type="ECO:0000255" key="1">
    <source>
        <dbReference type="HAMAP-Rule" id="MF_00184"/>
    </source>
</evidence>
<evidence type="ECO:0000255" key="2">
    <source>
        <dbReference type="PROSITE-ProRule" id="PRU01228"/>
    </source>
</evidence>
<feature type="chain" id="PRO_1000020536" description="Threonine--tRNA ligase">
    <location>
        <begin position="1"/>
        <end position="648"/>
    </location>
</feature>
<feature type="domain" description="TGS" evidence="2">
    <location>
        <begin position="1"/>
        <end position="61"/>
    </location>
</feature>
<feature type="region of interest" description="Catalytic" evidence="1">
    <location>
        <begin position="242"/>
        <end position="540"/>
    </location>
</feature>
<feature type="binding site" evidence="1">
    <location>
        <position position="336"/>
    </location>
    <ligand>
        <name>Zn(2+)</name>
        <dbReference type="ChEBI" id="CHEBI:29105"/>
    </ligand>
</feature>
<feature type="binding site" evidence="1">
    <location>
        <position position="387"/>
    </location>
    <ligand>
        <name>Zn(2+)</name>
        <dbReference type="ChEBI" id="CHEBI:29105"/>
    </ligand>
</feature>
<feature type="binding site" evidence="1">
    <location>
        <position position="517"/>
    </location>
    <ligand>
        <name>Zn(2+)</name>
        <dbReference type="ChEBI" id="CHEBI:29105"/>
    </ligand>
</feature>
<protein>
    <recommendedName>
        <fullName evidence="1">Threonine--tRNA ligase</fullName>
        <ecNumber evidence="1">6.1.1.3</ecNumber>
    </recommendedName>
    <alternativeName>
        <fullName evidence="1">Threonyl-tRNA synthetase</fullName>
        <shortName evidence="1">ThrRS</shortName>
    </alternativeName>
</protein>
<accession>Q03LP1</accession>
<reference key="1">
    <citation type="journal article" date="2006" name="Proc. Natl. Acad. Sci. U.S.A.">
        <title>Comparative genomics of the lactic acid bacteria.</title>
        <authorList>
            <person name="Makarova K.S."/>
            <person name="Slesarev A."/>
            <person name="Wolf Y.I."/>
            <person name="Sorokin A."/>
            <person name="Mirkin B."/>
            <person name="Koonin E.V."/>
            <person name="Pavlov A."/>
            <person name="Pavlova N."/>
            <person name="Karamychev V."/>
            <person name="Polouchine N."/>
            <person name="Shakhova V."/>
            <person name="Grigoriev I."/>
            <person name="Lou Y."/>
            <person name="Rohksar D."/>
            <person name="Lucas S."/>
            <person name="Huang K."/>
            <person name="Goodstein D.M."/>
            <person name="Hawkins T."/>
            <person name="Plengvidhya V."/>
            <person name="Welker D."/>
            <person name="Hughes J."/>
            <person name="Goh Y."/>
            <person name="Benson A."/>
            <person name="Baldwin K."/>
            <person name="Lee J.-H."/>
            <person name="Diaz-Muniz I."/>
            <person name="Dosti B."/>
            <person name="Smeianov V."/>
            <person name="Wechter W."/>
            <person name="Barabote R."/>
            <person name="Lorca G."/>
            <person name="Altermann E."/>
            <person name="Barrangou R."/>
            <person name="Ganesan B."/>
            <person name="Xie Y."/>
            <person name="Rawsthorne H."/>
            <person name="Tamir D."/>
            <person name="Parker C."/>
            <person name="Breidt F."/>
            <person name="Broadbent J.R."/>
            <person name="Hutkins R."/>
            <person name="O'Sullivan D."/>
            <person name="Steele J."/>
            <person name="Unlu G."/>
            <person name="Saier M.H. Jr."/>
            <person name="Klaenhammer T."/>
            <person name="Richardson P."/>
            <person name="Kozyavkin S."/>
            <person name="Weimer B.C."/>
            <person name="Mills D.A."/>
        </authorList>
    </citation>
    <scope>NUCLEOTIDE SEQUENCE [LARGE SCALE GENOMIC DNA]</scope>
    <source>
        <strain>ATCC BAA-491 / LMD-9</strain>
    </source>
</reference>
<organism>
    <name type="scientific">Streptococcus thermophilus (strain ATCC BAA-491 / LMD-9)</name>
    <dbReference type="NCBI Taxonomy" id="322159"/>
    <lineage>
        <taxon>Bacteria</taxon>
        <taxon>Bacillati</taxon>
        <taxon>Bacillota</taxon>
        <taxon>Bacilli</taxon>
        <taxon>Lactobacillales</taxon>
        <taxon>Streptococcaceae</taxon>
        <taxon>Streptococcus</taxon>
    </lineage>
</organism>
<name>SYT_STRTD</name>
<keyword id="KW-0030">Aminoacyl-tRNA synthetase</keyword>
<keyword id="KW-0067">ATP-binding</keyword>
<keyword id="KW-0963">Cytoplasm</keyword>
<keyword id="KW-0436">Ligase</keyword>
<keyword id="KW-0479">Metal-binding</keyword>
<keyword id="KW-0547">Nucleotide-binding</keyword>
<keyword id="KW-0648">Protein biosynthesis</keyword>
<keyword id="KW-0694">RNA-binding</keyword>
<keyword id="KW-0820">tRNA-binding</keyword>
<keyword id="KW-0862">Zinc</keyword>
<proteinExistence type="inferred from homology"/>
<sequence length="648" mass="74847">MINITFPDGAVREFESGVTTFEIAQSISNSLAKKALAGKFNGKLIDTTRVITEDGSIEIVTPDHEDALPILRHSAAHLFAQAARRLFPDIHLGVGPAIEDGFYYDTDNQAGQISNEDLPRIEEEMKKIVKENFPSIREEVTKDEAREIFKNDPYKLELIEEHSEDDGGLTIYRQGEYVDLCRGPHVPSTGRIQIFHLLNVAGAYWRGNSDNAMMQRIYGTAWFDKKDLKAYLKRLEEAKERDHRKLGKELDLFMISQEVGQGLPFWLPNGATIRRELERYIVDKEVAAGYQHVYTPPIASVELYKTSGHWDHYREDMFPPMDMGDGEEFVLRPMNCPHHIEVYKHHVHSYRELPIRIAEIGMMHRYEKSGALTGLQRVREMSLNDGHTFVAPEQIEEEFKKILQLIIDVYEDFNLTDYRFRLSYRDPADKHKYFDNDEMWENAQRMLKAAVDDMGVEYYEAEGEAAFYGPKLDIQVKTALGKEETLSTIQLDFLLPERFDLHYIGADGEEHRPVMIHRGVISTMERFTAILIENYKGAFPTWLAPHQVTLIPVSNEKHVDYAWEVAKKLRDRGVRAEVDERNEKMQFKIRASQTQKIPYQLIVGDKEMKDGTVNVRRYGQKQTHTETVSEFVENILADIARKSRPDAE</sequence>
<gene>
    <name evidence="1" type="primary">thrS</name>
    <name type="ordered locus">STER_0613</name>
</gene>
<comment type="function">
    <text evidence="1">Catalyzes the attachment of threonine to tRNA(Thr) in a two-step reaction: L-threonine is first activated by ATP to form Thr-AMP and then transferred to the acceptor end of tRNA(Thr). Also edits incorrectly charged L-seryl-tRNA(Thr).</text>
</comment>
<comment type="catalytic activity">
    <reaction evidence="1">
        <text>tRNA(Thr) + L-threonine + ATP = L-threonyl-tRNA(Thr) + AMP + diphosphate + H(+)</text>
        <dbReference type="Rhea" id="RHEA:24624"/>
        <dbReference type="Rhea" id="RHEA-COMP:9670"/>
        <dbReference type="Rhea" id="RHEA-COMP:9704"/>
        <dbReference type="ChEBI" id="CHEBI:15378"/>
        <dbReference type="ChEBI" id="CHEBI:30616"/>
        <dbReference type="ChEBI" id="CHEBI:33019"/>
        <dbReference type="ChEBI" id="CHEBI:57926"/>
        <dbReference type="ChEBI" id="CHEBI:78442"/>
        <dbReference type="ChEBI" id="CHEBI:78534"/>
        <dbReference type="ChEBI" id="CHEBI:456215"/>
        <dbReference type="EC" id="6.1.1.3"/>
    </reaction>
</comment>
<comment type="cofactor">
    <cofactor evidence="1">
        <name>Zn(2+)</name>
        <dbReference type="ChEBI" id="CHEBI:29105"/>
    </cofactor>
    <text evidence="1">Binds 1 zinc ion per subunit.</text>
</comment>
<comment type="subunit">
    <text evidence="1">Homodimer.</text>
</comment>
<comment type="subcellular location">
    <subcellularLocation>
        <location evidence="1">Cytoplasm</location>
    </subcellularLocation>
</comment>
<comment type="similarity">
    <text evidence="1">Belongs to the class-II aminoacyl-tRNA synthetase family.</text>
</comment>